<dbReference type="EMBL" id="BX897699">
    <property type="protein sequence ID" value="CAF28277.1"/>
    <property type="molecule type" value="Genomic_DNA"/>
</dbReference>
<dbReference type="RefSeq" id="WP_011181282.1">
    <property type="nucleotide sequence ID" value="NZ_LRIJ02000001.1"/>
</dbReference>
<dbReference type="SMR" id="Q6G1Y5"/>
<dbReference type="PaxDb" id="283166-BH15140"/>
<dbReference type="EnsemblBacteria" id="CAF28277">
    <property type="protein sequence ID" value="CAF28277"/>
    <property type="gene ID" value="BH15140"/>
</dbReference>
<dbReference type="KEGG" id="bhe:BH15140"/>
<dbReference type="eggNOG" id="COG3750">
    <property type="taxonomic scope" value="Bacteria"/>
</dbReference>
<dbReference type="Proteomes" id="UP000000421">
    <property type="component" value="Chromosome"/>
</dbReference>
<dbReference type="GO" id="GO:0003677">
    <property type="term" value="F:DNA binding"/>
    <property type="evidence" value="ECO:0007669"/>
    <property type="project" value="InterPro"/>
</dbReference>
<dbReference type="HAMAP" id="MF_00797">
    <property type="entry name" value="UPF0335"/>
    <property type="match status" value="1"/>
</dbReference>
<dbReference type="InterPro" id="IPR018753">
    <property type="entry name" value="GapR-like"/>
</dbReference>
<dbReference type="InterPro" id="IPR046367">
    <property type="entry name" value="GapR-like_DNA-bd"/>
</dbReference>
<dbReference type="NCBIfam" id="NF010247">
    <property type="entry name" value="PRK13694.1"/>
    <property type="match status" value="1"/>
</dbReference>
<dbReference type="Pfam" id="PF10073">
    <property type="entry name" value="GapR_DNA-bd"/>
    <property type="match status" value="1"/>
</dbReference>
<name>Y1514_BARHE</name>
<accession>Q6G1Y5</accession>
<sequence length="85" mass="9911">MNTVTDETHAISVNQLRAFIERIERLEEEKKTISDDIKEVYAELKGSGFDSKAVRSIIRLRKKEEHERMEEEAIIQLYKDALGMS</sequence>
<feature type="chain" id="PRO_0000219921" description="UPF0335 protein BH15140">
    <location>
        <begin position="1"/>
        <end position="85"/>
    </location>
</feature>
<organism>
    <name type="scientific">Bartonella henselae (strain ATCC 49882 / DSM 28221 / CCUG 30454 / Houston 1)</name>
    <name type="common">Rochalimaea henselae</name>
    <dbReference type="NCBI Taxonomy" id="283166"/>
    <lineage>
        <taxon>Bacteria</taxon>
        <taxon>Pseudomonadati</taxon>
        <taxon>Pseudomonadota</taxon>
        <taxon>Alphaproteobacteria</taxon>
        <taxon>Hyphomicrobiales</taxon>
        <taxon>Bartonellaceae</taxon>
        <taxon>Bartonella</taxon>
    </lineage>
</organism>
<gene>
    <name type="ordered locus">BH15140</name>
</gene>
<proteinExistence type="inferred from homology"/>
<reference key="1">
    <citation type="journal article" date="2004" name="Proc. Natl. Acad. Sci. U.S.A.">
        <title>The louse-borne human pathogen Bartonella quintana is a genomic derivative of the zoonotic agent Bartonella henselae.</title>
        <authorList>
            <person name="Alsmark U.C.M."/>
            <person name="Frank A.C."/>
            <person name="Karlberg E.O."/>
            <person name="Legault B.-A."/>
            <person name="Ardell D.H."/>
            <person name="Canbaeck B."/>
            <person name="Eriksson A.-S."/>
            <person name="Naeslund A.K."/>
            <person name="Handley S.A."/>
            <person name="Huvet M."/>
            <person name="La Scola B."/>
            <person name="Holmberg M."/>
            <person name="Andersson S.G.E."/>
        </authorList>
    </citation>
    <scope>NUCLEOTIDE SEQUENCE [LARGE SCALE GENOMIC DNA]</scope>
    <source>
        <strain>ATCC 49882 / DSM 28221 / CCUG 30454 / Houston 1</strain>
    </source>
</reference>
<protein>
    <recommendedName>
        <fullName evidence="1">UPF0335 protein BH15140</fullName>
    </recommendedName>
</protein>
<comment type="similarity">
    <text evidence="1">Belongs to the UPF0335 family.</text>
</comment>
<evidence type="ECO:0000255" key="1">
    <source>
        <dbReference type="HAMAP-Rule" id="MF_00797"/>
    </source>
</evidence>